<sequence>MTQAVMLQGTASDVGKSVLVAGLCRIFYQDGLRTAPFKSQNMALNSGITPDGKEMGRAQIFQAEAAGITPDVRMNPVLLKPTSDRQAQVVLMGKVATNMDAVSYHDYKPRLREQILAVYNSLAQEYDVIVLEGAGSPAEINLRDRDIVNMGMAEMAQCPVILVADIDRGGVFAAIYGTLALLHKQERDRVKGVIINKFRGDVALLYSGIEQIESLTGVPVLGVMPWLDVDLEDEDGVALQNDKYRGNAPRDITIAIVQLPHISNFTDFNALAAQPDVRIRYIRRPEALTDADLVILPGSKNTLSDLAWLRESGMADAVLQTHRQGVPVMGICGGYQMLGDTIVDEVESGLGTQPGLGLLNTITRFAQDKTTTQVNATMSGELPGWLAAAAGLPVRGYEIHMGETVLQEGCCTAMTLQKNGCSVADGAVTADGLAFGTYLHGLFDSDAFTRAVVNGLRARKGLAPWETTFCYAEHKARQFDLLAEAMRQHIDIDKIYTIMQQHQEPV</sequence>
<proteinExistence type="inferred from homology"/>
<comment type="function">
    <text evidence="2">Catalyzes amidations at positions B, D, E, and G on adenosylcobyrinic A,C-diamide. NH(2) groups are provided by glutamine, and one molecule of ATP is hydrogenolyzed for each amidation.</text>
</comment>
<comment type="pathway">
    <text evidence="2">Cofactor biosynthesis; adenosylcobalamin biosynthesis; adenosylcobalamin from cob(II)yrinate a,c-diamide: step 3/7.</text>
</comment>
<comment type="subunit">
    <text evidence="1">Homodimer.</text>
</comment>
<comment type="similarity">
    <text evidence="2">Belongs to the CobB/CobQ family. CobQ subfamily.</text>
</comment>
<feature type="chain" id="PRO_0000141328" description="Cobyric acid synthase">
    <location>
        <begin position="1"/>
        <end position="506"/>
    </location>
</feature>
<feature type="domain" description="GATase cobBQ-type" evidence="2">
    <location>
        <begin position="251"/>
        <end position="448"/>
    </location>
</feature>
<feature type="active site" description="Nucleophile" evidence="2">
    <location>
        <position position="332"/>
    </location>
</feature>
<feature type="active site" evidence="2">
    <location>
        <position position="440"/>
    </location>
</feature>
<gene>
    <name evidence="2" type="primary">cobQ</name>
    <name type="synonym">cbiP</name>
    <name type="ordered locus">STY2222</name>
    <name type="ordered locus">t0855</name>
</gene>
<protein>
    <recommendedName>
        <fullName evidence="2">Cobyric acid synthase</fullName>
    </recommendedName>
</protein>
<accession>Q8Z5N6</accession>
<organism>
    <name type="scientific">Salmonella typhi</name>
    <dbReference type="NCBI Taxonomy" id="90370"/>
    <lineage>
        <taxon>Bacteria</taxon>
        <taxon>Pseudomonadati</taxon>
        <taxon>Pseudomonadota</taxon>
        <taxon>Gammaproteobacteria</taxon>
        <taxon>Enterobacterales</taxon>
        <taxon>Enterobacteriaceae</taxon>
        <taxon>Salmonella</taxon>
    </lineage>
</organism>
<keyword id="KW-0169">Cobalamin biosynthesis</keyword>
<keyword id="KW-0315">Glutamine amidotransferase</keyword>
<evidence type="ECO:0000250" key="1"/>
<evidence type="ECO:0000255" key="2">
    <source>
        <dbReference type="HAMAP-Rule" id="MF_00028"/>
    </source>
</evidence>
<dbReference type="EMBL" id="AL513382">
    <property type="protein sequence ID" value="CAD02380.1"/>
    <property type="molecule type" value="Genomic_DNA"/>
</dbReference>
<dbReference type="EMBL" id="AE014613">
    <property type="protein sequence ID" value="AAO68539.1"/>
    <property type="molecule type" value="Genomic_DNA"/>
</dbReference>
<dbReference type="RefSeq" id="NP_456573.1">
    <property type="nucleotide sequence ID" value="NC_003198.1"/>
</dbReference>
<dbReference type="RefSeq" id="WP_000189676.1">
    <property type="nucleotide sequence ID" value="NZ_WSUR01000002.1"/>
</dbReference>
<dbReference type="SMR" id="Q8Z5N6"/>
<dbReference type="STRING" id="220341.gene:17586135"/>
<dbReference type="KEGG" id="stt:t0855"/>
<dbReference type="KEGG" id="sty:STY2222"/>
<dbReference type="PATRIC" id="fig|220341.7.peg.2241"/>
<dbReference type="eggNOG" id="COG1492">
    <property type="taxonomic scope" value="Bacteria"/>
</dbReference>
<dbReference type="HOGENOM" id="CLU_019250_2_2_6"/>
<dbReference type="OMA" id="DVRMNPL"/>
<dbReference type="OrthoDB" id="9808302at2"/>
<dbReference type="UniPathway" id="UPA00148">
    <property type="reaction ID" value="UER00234"/>
</dbReference>
<dbReference type="Proteomes" id="UP000000541">
    <property type="component" value="Chromosome"/>
</dbReference>
<dbReference type="Proteomes" id="UP000002670">
    <property type="component" value="Chromosome"/>
</dbReference>
<dbReference type="GO" id="GO:0015420">
    <property type="term" value="F:ABC-type vitamin B12 transporter activity"/>
    <property type="evidence" value="ECO:0007669"/>
    <property type="project" value="UniProtKB-UniRule"/>
</dbReference>
<dbReference type="GO" id="GO:0003824">
    <property type="term" value="F:catalytic activity"/>
    <property type="evidence" value="ECO:0007669"/>
    <property type="project" value="InterPro"/>
</dbReference>
<dbReference type="GO" id="GO:0009236">
    <property type="term" value="P:cobalamin biosynthetic process"/>
    <property type="evidence" value="ECO:0007669"/>
    <property type="project" value="UniProtKB-UniRule"/>
</dbReference>
<dbReference type="CDD" id="cd05389">
    <property type="entry name" value="CobQ_N"/>
    <property type="match status" value="1"/>
</dbReference>
<dbReference type="CDD" id="cd01750">
    <property type="entry name" value="GATase1_CobQ"/>
    <property type="match status" value="1"/>
</dbReference>
<dbReference type="Gene3D" id="3.40.50.880">
    <property type="match status" value="1"/>
</dbReference>
<dbReference type="Gene3D" id="3.40.50.300">
    <property type="entry name" value="P-loop containing nucleotide triphosphate hydrolases"/>
    <property type="match status" value="1"/>
</dbReference>
<dbReference type="HAMAP" id="MF_00028">
    <property type="entry name" value="CobQ"/>
    <property type="match status" value="1"/>
</dbReference>
<dbReference type="InterPro" id="IPR029062">
    <property type="entry name" value="Class_I_gatase-like"/>
</dbReference>
<dbReference type="InterPro" id="IPR002586">
    <property type="entry name" value="CobQ/CobB/MinD/ParA_Nub-bd_dom"/>
</dbReference>
<dbReference type="InterPro" id="IPR033949">
    <property type="entry name" value="CobQ_GATase1"/>
</dbReference>
<dbReference type="InterPro" id="IPR047045">
    <property type="entry name" value="CobQ_N"/>
</dbReference>
<dbReference type="InterPro" id="IPR004459">
    <property type="entry name" value="CobQ_synth"/>
</dbReference>
<dbReference type="InterPro" id="IPR011698">
    <property type="entry name" value="GATase_3"/>
</dbReference>
<dbReference type="InterPro" id="IPR027417">
    <property type="entry name" value="P-loop_NTPase"/>
</dbReference>
<dbReference type="NCBIfam" id="TIGR00313">
    <property type="entry name" value="cobQ"/>
    <property type="match status" value="1"/>
</dbReference>
<dbReference type="NCBIfam" id="NF001989">
    <property type="entry name" value="PRK00784.1"/>
    <property type="match status" value="1"/>
</dbReference>
<dbReference type="PANTHER" id="PTHR21343:SF1">
    <property type="entry name" value="COBYRIC ACID SYNTHASE"/>
    <property type="match status" value="1"/>
</dbReference>
<dbReference type="PANTHER" id="PTHR21343">
    <property type="entry name" value="DETHIOBIOTIN SYNTHETASE"/>
    <property type="match status" value="1"/>
</dbReference>
<dbReference type="Pfam" id="PF01656">
    <property type="entry name" value="CbiA"/>
    <property type="match status" value="1"/>
</dbReference>
<dbReference type="Pfam" id="PF07685">
    <property type="entry name" value="GATase_3"/>
    <property type="match status" value="1"/>
</dbReference>
<dbReference type="SUPFAM" id="SSF52317">
    <property type="entry name" value="Class I glutamine amidotransferase-like"/>
    <property type="match status" value="1"/>
</dbReference>
<dbReference type="SUPFAM" id="SSF52540">
    <property type="entry name" value="P-loop containing nucleoside triphosphate hydrolases"/>
    <property type="match status" value="1"/>
</dbReference>
<dbReference type="PROSITE" id="PS51274">
    <property type="entry name" value="GATASE_COBBQ"/>
    <property type="match status" value="1"/>
</dbReference>
<reference key="1">
    <citation type="journal article" date="2001" name="Nature">
        <title>Complete genome sequence of a multiple drug resistant Salmonella enterica serovar Typhi CT18.</title>
        <authorList>
            <person name="Parkhill J."/>
            <person name="Dougan G."/>
            <person name="James K.D."/>
            <person name="Thomson N.R."/>
            <person name="Pickard D."/>
            <person name="Wain J."/>
            <person name="Churcher C.M."/>
            <person name="Mungall K.L."/>
            <person name="Bentley S.D."/>
            <person name="Holden M.T.G."/>
            <person name="Sebaihia M."/>
            <person name="Baker S."/>
            <person name="Basham D."/>
            <person name="Brooks K."/>
            <person name="Chillingworth T."/>
            <person name="Connerton P."/>
            <person name="Cronin A."/>
            <person name="Davis P."/>
            <person name="Davies R.M."/>
            <person name="Dowd L."/>
            <person name="White N."/>
            <person name="Farrar J."/>
            <person name="Feltwell T."/>
            <person name="Hamlin N."/>
            <person name="Haque A."/>
            <person name="Hien T.T."/>
            <person name="Holroyd S."/>
            <person name="Jagels K."/>
            <person name="Krogh A."/>
            <person name="Larsen T.S."/>
            <person name="Leather S."/>
            <person name="Moule S."/>
            <person name="O'Gaora P."/>
            <person name="Parry C."/>
            <person name="Quail M.A."/>
            <person name="Rutherford K.M."/>
            <person name="Simmonds M."/>
            <person name="Skelton J."/>
            <person name="Stevens K."/>
            <person name="Whitehead S."/>
            <person name="Barrell B.G."/>
        </authorList>
    </citation>
    <scope>NUCLEOTIDE SEQUENCE [LARGE SCALE GENOMIC DNA]</scope>
    <source>
        <strain>CT18</strain>
    </source>
</reference>
<reference key="2">
    <citation type="journal article" date="2003" name="J. Bacteriol.">
        <title>Comparative genomics of Salmonella enterica serovar Typhi strains Ty2 and CT18.</title>
        <authorList>
            <person name="Deng W."/>
            <person name="Liou S.-R."/>
            <person name="Plunkett G. III"/>
            <person name="Mayhew G.F."/>
            <person name="Rose D.J."/>
            <person name="Burland V."/>
            <person name="Kodoyianni V."/>
            <person name="Schwartz D.C."/>
            <person name="Blattner F.R."/>
        </authorList>
    </citation>
    <scope>NUCLEOTIDE SEQUENCE [LARGE SCALE GENOMIC DNA]</scope>
    <source>
        <strain>ATCC 700931 / Ty2</strain>
    </source>
</reference>
<name>COBQ_SALTI</name>